<proteinExistence type="inferred from homology"/>
<protein>
    <recommendedName>
        <fullName evidence="1">Mannonate dehydratase</fullName>
        <ecNumber evidence="1">4.2.1.8</ecNumber>
    </recommendedName>
    <alternativeName>
        <fullName evidence="1">D-mannonate hydro-lyase</fullName>
    </alternativeName>
</protein>
<keyword id="KW-0408">Iron</keyword>
<keyword id="KW-0456">Lyase</keyword>
<keyword id="KW-0464">Manganese</keyword>
<keyword id="KW-1185">Reference proteome</keyword>
<comment type="function">
    <text evidence="1">Catalyzes the dehydration of D-mannonate.</text>
</comment>
<comment type="catalytic activity">
    <reaction evidence="1">
        <text>D-mannonate = 2-dehydro-3-deoxy-D-gluconate + H2O</text>
        <dbReference type="Rhea" id="RHEA:20097"/>
        <dbReference type="ChEBI" id="CHEBI:15377"/>
        <dbReference type="ChEBI" id="CHEBI:17767"/>
        <dbReference type="ChEBI" id="CHEBI:57990"/>
        <dbReference type="EC" id="4.2.1.8"/>
    </reaction>
</comment>
<comment type="cofactor">
    <cofactor evidence="1">
        <name>Fe(2+)</name>
        <dbReference type="ChEBI" id="CHEBI:29033"/>
    </cofactor>
    <cofactor evidence="1">
        <name>Mn(2+)</name>
        <dbReference type="ChEBI" id="CHEBI:29035"/>
    </cofactor>
</comment>
<comment type="pathway">
    <text evidence="1">Carbohydrate metabolism; pentose and glucuronate interconversion.</text>
</comment>
<comment type="similarity">
    <text evidence="1">Belongs to the mannonate dehydratase family.</text>
</comment>
<name>UXUA_ECO27</name>
<evidence type="ECO:0000255" key="1">
    <source>
        <dbReference type="HAMAP-Rule" id="MF_00106"/>
    </source>
</evidence>
<feature type="chain" id="PRO_1000197926" description="Mannonate dehydratase">
    <location>
        <begin position="1"/>
        <end position="394"/>
    </location>
</feature>
<organism>
    <name type="scientific">Escherichia coli O127:H6 (strain E2348/69 / EPEC)</name>
    <dbReference type="NCBI Taxonomy" id="574521"/>
    <lineage>
        <taxon>Bacteria</taxon>
        <taxon>Pseudomonadati</taxon>
        <taxon>Pseudomonadota</taxon>
        <taxon>Gammaproteobacteria</taxon>
        <taxon>Enterobacterales</taxon>
        <taxon>Enterobacteriaceae</taxon>
        <taxon>Escherichia</taxon>
    </lineage>
</organism>
<sequence length="394" mass="44794">MEQTWRWYGPNDPVSLADVRQAGATGVVTALHHIPNGEVWSVEEILKRKAIVEDAGLVWSVVESVPIHEDIKTHTGNYEQWIANYQQTLRNLAQCGIRTVCYNFMPVLDWTRTDLEYVLPDGSKALRFDQIEFAAFEMHILKRPGAEADYTEEEIAQAAVRFATMSDEDKARLTRNIIAGLPGAEEGYTLDQFRKHLELYKDIDKAKLRENFAVFLKAIIPVAEEVGVRMAVHPDDPPRPILGLPRIVSTIEDMQWMVDTVNSMANGFTMCTGSYGVRADNDLVDMIKQFGPRIYFTHLRSTMREDNPKTFHEAAHLNGDVDMYEVVKAIVEEEHRRKAEGKEDLIPMRPDHGHQMLDDLKKKTNPGYSAIGRLKGLAEVRGVELAIQRAFFSR</sequence>
<dbReference type="EC" id="4.2.1.8" evidence="1"/>
<dbReference type="EMBL" id="FM180568">
    <property type="protein sequence ID" value="CAS12176.1"/>
    <property type="molecule type" value="Genomic_DNA"/>
</dbReference>
<dbReference type="RefSeq" id="WP_000438591.1">
    <property type="nucleotide sequence ID" value="NC_011601.1"/>
</dbReference>
<dbReference type="SMR" id="B7UQW0"/>
<dbReference type="KEGG" id="ecg:E2348C_4628"/>
<dbReference type="HOGENOM" id="CLU_058621_2_0_6"/>
<dbReference type="UniPathway" id="UPA00246"/>
<dbReference type="Proteomes" id="UP000008205">
    <property type="component" value="Chromosome"/>
</dbReference>
<dbReference type="GO" id="GO:0008198">
    <property type="term" value="F:ferrous iron binding"/>
    <property type="evidence" value="ECO:0007669"/>
    <property type="project" value="TreeGrafter"/>
</dbReference>
<dbReference type="GO" id="GO:0030145">
    <property type="term" value="F:manganese ion binding"/>
    <property type="evidence" value="ECO:0007669"/>
    <property type="project" value="TreeGrafter"/>
</dbReference>
<dbReference type="GO" id="GO:0008927">
    <property type="term" value="F:mannonate dehydratase activity"/>
    <property type="evidence" value="ECO:0007669"/>
    <property type="project" value="UniProtKB-UniRule"/>
</dbReference>
<dbReference type="GO" id="GO:0042840">
    <property type="term" value="P:D-glucuronate catabolic process"/>
    <property type="evidence" value="ECO:0007669"/>
    <property type="project" value="TreeGrafter"/>
</dbReference>
<dbReference type="FunFam" id="3.20.20.150:FF:000004">
    <property type="entry name" value="Mannonate dehydratase"/>
    <property type="match status" value="1"/>
</dbReference>
<dbReference type="FunFam" id="3.20.20.150:FF:000005">
    <property type="entry name" value="Mannonate dehydratase"/>
    <property type="match status" value="1"/>
</dbReference>
<dbReference type="Gene3D" id="3.20.20.150">
    <property type="entry name" value="Divalent-metal-dependent TIM barrel enzymes"/>
    <property type="match status" value="2"/>
</dbReference>
<dbReference type="HAMAP" id="MF_00106">
    <property type="entry name" value="UxuA"/>
    <property type="match status" value="1"/>
</dbReference>
<dbReference type="InterPro" id="IPR004628">
    <property type="entry name" value="Man_deHydtase"/>
</dbReference>
<dbReference type="InterPro" id="IPR036237">
    <property type="entry name" value="Xyl_isomerase-like_sf"/>
</dbReference>
<dbReference type="NCBIfam" id="NF003027">
    <property type="entry name" value="PRK03906.1"/>
    <property type="match status" value="1"/>
</dbReference>
<dbReference type="NCBIfam" id="TIGR00695">
    <property type="entry name" value="uxuA"/>
    <property type="match status" value="1"/>
</dbReference>
<dbReference type="PANTHER" id="PTHR30387">
    <property type="entry name" value="MANNONATE DEHYDRATASE"/>
    <property type="match status" value="1"/>
</dbReference>
<dbReference type="PANTHER" id="PTHR30387:SF2">
    <property type="entry name" value="MANNONATE DEHYDRATASE"/>
    <property type="match status" value="1"/>
</dbReference>
<dbReference type="Pfam" id="PF03786">
    <property type="entry name" value="UxuA"/>
    <property type="match status" value="1"/>
</dbReference>
<dbReference type="PIRSF" id="PIRSF016049">
    <property type="entry name" value="Man_dehyd"/>
    <property type="match status" value="1"/>
</dbReference>
<dbReference type="SUPFAM" id="SSF51658">
    <property type="entry name" value="Xylose isomerase-like"/>
    <property type="match status" value="1"/>
</dbReference>
<accession>B7UQW0</accession>
<reference key="1">
    <citation type="journal article" date="2009" name="J. Bacteriol.">
        <title>Complete genome sequence and comparative genome analysis of enteropathogenic Escherichia coli O127:H6 strain E2348/69.</title>
        <authorList>
            <person name="Iguchi A."/>
            <person name="Thomson N.R."/>
            <person name="Ogura Y."/>
            <person name="Saunders D."/>
            <person name="Ooka T."/>
            <person name="Henderson I.R."/>
            <person name="Harris D."/>
            <person name="Asadulghani M."/>
            <person name="Kurokawa K."/>
            <person name="Dean P."/>
            <person name="Kenny B."/>
            <person name="Quail M.A."/>
            <person name="Thurston S."/>
            <person name="Dougan G."/>
            <person name="Hayashi T."/>
            <person name="Parkhill J."/>
            <person name="Frankel G."/>
        </authorList>
    </citation>
    <scope>NUCLEOTIDE SEQUENCE [LARGE SCALE GENOMIC DNA]</scope>
    <source>
        <strain>E2348/69 / EPEC</strain>
    </source>
</reference>
<gene>
    <name evidence="1" type="primary">uxuA</name>
    <name type="ordered locus">E2348C_4628</name>
</gene>